<name>SCND3_HUMAN</name>
<proteinExistence type="evidence at protein level"/>
<organism>
    <name type="scientific">Homo sapiens</name>
    <name type="common">Human</name>
    <dbReference type="NCBI Taxonomy" id="9606"/>
    <lineage>
        <taxon>Eukaryota</taxon>
        <taxon>Metazoa</taxon>
        <taxon>Chordata</taxon>
        <taxon>Craniata</taxon>
        <taxon>Vertebrata</taxon>
        <taxon>Euteleostomi</taxon>
        <taxon>Mammalia</taxon>
        <taxon>Eutheria</taxon>
        <taxon>Euarchontoglires</taxon>
        <taxon>Primates</taxon>
        <taxon>Haplorrhini</taxon>
        <taxon>Catarrhini</taxon>
        <taxon>Hominidae</taxon>
        <taxon>Homo</taxon>
    </lineage>
</organism>
<sequence>MEAVSRVFPALAGQAPEEQGEIIKVKVKEEDHTWDQESALRRNLSYTRELSRQRFRQFCYQETPGPREALSQLRELCRQWLNPEIHTKEQILELLVLEQFLTILPEELQSWVREHNPESGEEVVTLLEDLERELDEPRQQVSQGTYGQEVSMEEMIPLDSAKESLGTQLQSMEDRMECESPEPHPLQDNGSFLWFSMMSQSMGGDNLSSLDTNEAEIEPENMREKFFRSLARLLENKSNNTKIFSKAKYCQLIKEVKEAKAKAKKESVDYRRLARFDVILVQGNEKLIEAVNGETDKIRYYLHSEDLFDILHNTHLSIGHGGRTRMEKELQAKYKNITKEVIMLYLTLCKPCQQKNSKLKKVLTSKSIKEVSSRCQVDLIDMQLNPDGEYRFILHYQDLCTKLTFLRSLKSKRPTEVAHALLDIFTIIGAPSVLQSDNGREFSSQVVSELSNIWPELKIVHGKSQTCQSQSSAEQTEDIRKRIFSWMQTNNSSHWTEFLWFIQMSQNQPYHRSMQQTPCESAFSSEAKLGLSHSQLTEELVASLHTENELDQADKELENTLRAQYEENIETGTDSSDIEENLSVTPKVAEKSPPESRLRFLSCVVCEKECTGVNSCISCDGNIHAICGVPSQHGTEGCGRQITCSLCYETSTMKRKHDEIQRSLPVKPSKMLKPSGTPFSPDKVGDWMAKQASLDFFVKKRHAFSEHSSSNKRNVNNRSYPEEGKTKRVHASFTRKYDPSYIEFGFVAVIDGEVLKPQCIICGDVLANEAMKPSKLKRHLYSKHKEISSQPKEFFERKSSELKSQPKQVFNVSHINISALRASYKVALPVAKSKTPYTIAETLVKDCIKEVCLEMLGESAAKKVAQVPLSNDTIARRIQELANDMEDQLIEQIKLAKYFSLQLDECRDIANMIILLVYVRFEHDDDIKEEFFFSASLPTNTTSSELYEAVKNYIVNKCGLEFKFCVGVCSDGAASMTGKHSEVVTQIKELAPECKTTHCFIHRESLAMKKISAELNSVLNDIVKIVNYIKSNSLNSRLFSLLCDNMEADHKQLLLHAEIRWLSRGKVLSRMFEIRNELLVFLQGKKPMWSQLFKDVNWTARLAYLSDIFSIFNDLNASMQGKNATYFSMADKVEGQKQKLEAWKNRISTDCYDMFHNLTTIINEVGNDLDIAHLRKVISEHLTNLLECFEFYFPSKEDPRIGNLWIQNPFLSSKDNLNLTVTLQDKLLKLATDEGLKISFENTASLPSFWIKAKNDYPELAEIALKLLLLFPSTYLCETGFSTLSVIKTKHRNSLNIHYPLRVALSSIQPRLDKLTSKKQAHLSH</sequence>
<keyword id="KW-0175">Coiled coil</keyword>
<keyword id="KW-0539">Nucleus</keyword>
<keyword id="KW-1267">Proteomics identification</keyword>
<keyword id="KW-1185">Reference proteome</keyword>
<reference key="1">
    <citation type="journal article" date="2007" name="BMC Genomics">
        <title>The full-ORF clone resource of the German cDNA consortium.</title>
        <authorList>
            <person name="Bechtel S."/>
            <person name="Rosenfelder H."/>
            <person name="Duda A."/>
            <person name="Schmidt C.P."/>
            <person name="Ernst U."/>
            <person name="Wellenreuther R."/>
            <person name="Mehrle A."/>
            <person name="Schuster C."/>
            <person name="Bahr A."/>
            <person name="Bloecker H."/>
            <person name="Heubner D."/>
            <person name="Hoerlein A."/>
            <person name="Michel G."/>
            <person name="Wedler H."/>
            <person name="Koehrer K."/>
            <person name="Ottenwaelder B."/>
            <person name="Poustka A."/>
            <person name="Wiemann S."/>
            <person name="Schupp I."/>
        </authorList>
    </citation>
    <scope>NUCLEOTIDE SEQUENCE [LARGE SCALE MRNA]</scope>
    <source>
        <tissue>Retina</tissue>
        <tissue>Testis</tissue>
    </source>
</reference>
<reference key="2">
    <citation type="submission" date="2004-01" db="EMBL/GenBank/DDBJ databases">
        <authorList>
            <person name="Zhou G."/>
            <person name="Liu X."/>
            <person name="Yu L."/>
        </authorList>
    </citation>
    <scope>NUCLEOTIDE SEQUENCE [LARGE SCALE MRNA]</scope>
</reference>
<reference key="3">
    <citation type="journal article" date="2003" name="Nature">
        <title>The DNA sequence and analysis of human chromosome 6.</title>
        <authorList>
            <person name="Mungall A.J."/>
            <person name="Palmer S.A."/>
            <person name="Sims S.K."/>
            <person name="Edwards C.A."/>
            <person name="Ashurst J.L."/>
            <person name="Wilming L."/>
            <person name="Jones M.C."/>
            <person name="Horton R."/>
            <person name="Hunt S.E."/>
            <person name="Scott C.E."/>
            <person name="Gilbert J.G.R."/>
            <person name="Clamp M.E."/>
            <person name="Bethel G."/>
            <person name="Milne S."/>
            <person name="Ainscough R."/>
            <person name="Almeida J.P."/>
            <person name="Ambrose K.D."/>
            <person name="Andrews T.D."/>
            <person name="Ashwell R.I.S."/>
            <person name="Babbage A.K."/>
            <person name="Bagguley C.L."/>
            <person name="Bailey J."/>
            <person name="Banerjee R."/>
            <person name="Barker D.J."/>
            <person name="Barlow K.F."/>
            <person name="Bates K."/>
            <person name="Beare D.M."/>
            <person name="Beasley H."/>
            <person name="Beasley O."/>
            <person name="Bird C.P."/>
            <person name="Blakey S.E."/>
            <person name="Bray-Allen S."/>
            <person name="Brook J."/>
            <person name="Brown A.J."/>
            <person name="Brown J.Y."/>
            <person name="Burford D.C."/>
            <person name="Burrill W."/>
            <person name="Burton J."/>
            <person name="Carder C."/>
            <person name="Carter N.P."/>
            <person name="Chapman J.C."/>
            <person name="Clark S.Y."/>
            <person name="Clark G."/>
            <person name="Clee C.M."/>
            <person name="Clegg S."/>
            <person name="Cobley V."/>
            <person name="Collier R.E."/>
            <person name="Collins J.E."/>
            <person name="Colman L.K."/>
            <person name="Corby N.R."/>
            <person name="Coville G.J."/>
            <person name="Culley K.M."/>
            <person name="Dhami P."/>
            <person name="Davies J."/>
            <person name="Dunn M."/>
            <person name="Earthrowl M.E."/>
            <person name="Ellington A.E."/>
            <person name="Evans K.A."/>
            <person name="Faulkner L."/>
            <person name="Francis M.D."/>
            <person name="Frankish A."/>
            <person name="Frankland J."/>
            <person name="French L."/>
            <person name="Garner P."/>
            <person name="Garnett J."/>
            <person name="Ghori M.J."/>
            <person name="Gilby L.M."/>
            <person name="Gillson C.J."/>
            <person name="Glithero R.J."/>
            <person name="Grafham D.V."/>
            <person name="Grant M."/>
            <person name="Gribble S."/>
            <person name="Griffiths C."/>
            <person name="Griffiths M.N.D."/>
            <person name="Hall R."/>
            <person name="Halls K.S."/>
            <person name="Hammond S."/>
            <person name="Harley J.L."/>
            <person name="Hart E.A."/>
            <person name="Heath P.D."/>
            <person name="Heathcott R."/>
            <person name="Holmes S.J."/>
            <person name="Howden P.J."/>
            <person name="Howe K.L."/>
            <person name="Howell G.R."/>
            <person name="Huckle E."/>
            <person name="Humphray S.J."/>
            <person name="Humphries M.D."/>
            <person name="Hunt A.R."/>
            <person name="Johnson C.M."/>
            <person name="Joy A.A."/>
            <person name="Kay M."/>
            <person name="Keenan S.J."/>
            <person name="Kimberley A.M."/>
            <person name="King A."/>
            <person name="Laird G.K."/>
            <person name="Langford C."/>
            <person name="Lawlor S."/>
            <person name="Leongamornlert D.A."/>
            <person name="Leversha M."/>
            <person name="Lloyd C.R."/>
            <person name="Lloyd D.M."/>
            <person name="Loveland J.E."/>
            <person name="Lovell J."/>
            <person name="Martin S."/>
            <person name="Mashreghi-Mohammadi M."/>
            <person name="Maslen G.L."/>
            <person name="Matthews L."/>
            <person name="McCann O.T."/>
            <person name="McLaren S.J."/>
            <person name="McLay K."/>
            <person name="McMurray A."/>
            <person name="Moore M.J.F."/>
            <person name="Mullikin J.C."/>
            <person name="Niblett D."/>
            <person name="Nickerson T."/>
            <person name="Novik K.L."/>
            <person name="Oliver K."/>
            <person name="Overton-Larty E.K."/>
            <person name="Parker A."/>
            <person name="Patel R."/>
            <person name="Pearce A.V."/>
            <person name="Peck A.I."/>
            <person name="Phillimore B.J.C.T."/>
            <person name="Phillips S."/>
            <person name="Plumb R.W."/>
            <person name="Porter K.M."/>
            <person name="Ramsey Y."/>
            <person name="Ranby S.A."/>
            <person name="Rice C.M."/>
            <person name="Ross M.T."/>
            <person name="Searle S.M."/>
            <person name="Sehra H.K."/>
            <person name="Sheridan E."/>
            <person name="Skuce C.D."/>
            <person name="Smith S."/>
            <person name="Smith M."/>
            <person name="Spraggon L."/>
            <person name="Squares S.L."/>
            <person name="Steward C.A."/>
            <person name="Sycamore N."/>
            <person name="Tamlyn-Hall G."/>
            <person name="Tester J."/>
            <person name="Theaker A.J."/>
            <person name="Thomas D.W."/>
            <person name="Thorpe A."/>
            <person name="Tracey A."/>
            <person name="Tromans A."/>
            <person name="Tubby B."/>
            <person name="Wall M."/>
            <person name="Wallis J.M."/>
            <person name="West A.P."/>
            <person name="White S.S."/>
            <person name="Whitehead S.L."/>
            <person name="Whittaker H."/>
            <person name="Wild A."/>
            <person name="Willey D.J."/>
            <person name="Wilmer T.E."/>
            <person name="Wood J.M."/>
            <person name="Wray P.W."/>
            <person name="Wyatt J.C."/>
            <person name="Young L."/>
            <person name="Younger R.M."/>
            <person name="Bentley D.R."/>
            <person name="Coulson A."/>
            <person name="Durbin R.M."/>
            <person name="Hubbard T."/>
            <person name="Sulston J.E."/>
            <person name="Dunham I."/>
            <person name="Rogers J."/>
            <person name="Beck S."/>
        </authorList>
    </citation>
    <scope>NUCLEOTIDE SEQUENCE [LARGE SCALE GENOMIC DNA]</scope>
    <scope>VARIANT LYS-465</scope>
</reference>
<reference key="4">
    <citation type="journal article" date="2004" name="Genome Res.">
        <title>The status, quality, and expansion of the NIH full-length cDNA project: the Mammalian Gene Collection (MGC).</title>
        <authorList>
            <consortium name="The MGC Project Team"/>
        </authorList>
    </citation>
    <scope>NUCLEOTIDE SEQUENCE [LARGE SCALE MRNA]</scope>
    <source>
        <tissue>Uterus</tissue>
    </source>
</reference>
<reference key="5">
    <citation type="journal article" date="2004" name="Nat. Genet.">
        <title>Complete sequencing and characterization of 21,243 full-length human cDNAs.</title>
        <authorList>
            <person name="Ota T."/>
            <person name="Suzuki Y."/>
            <person name="Nishikawa T."/>
            <person name="Otsuki T."/>
            <person name="Sugiyama T."/>
            <person name="Irie R."/>
            <person name="Wakamatsu A."/>
            <person name="Hayashi K."/>
            <person name="Sato H."/>
            <person name="Nagai K."/>
            <person name="Kimura K."/>
            <person name="Makita H."/>
            <person name="Sekine M."/>
            <person name="Obayashi M."/>
            <person name="Nishi T."/>
            <person name="Shibahara T."/>
            <person name="Tanaka T."/>
            <person name="Ishii S."/>
            <person name="Yamamoto J."/>
            <person name="Saito K."/>
            <person name="Kawai Y."/>
            <person name="Isono Y."/>
            <person name="Nakamura Y."/>
            <person name="Nagahari K."/>
            <person name="Murakami K."/>
            <person name="Yasuda T."/>
            <person name="Iwayanagi T."/>
            <person name="Wagatsuma M."/>
            <person name="Shiratori A."/>
            <person name="Sudo H."/>
            <person name="Hosoiri T."/>
            <person name="Kaku Y."/>
            <person name="Kodaira H."/>
            <person name="Kondo H."/>
            <person name="Sugawara M."/>
            <person name="Takahashi M."/>
            <person name="Kanda K."/>
            <person name="Yokoi T."/>
            <person name="Furuya T."/>
            <person name="Kikkawa E."/>
            <person name="Omura Y."/>
            <person name="Abe K."/>
            <person name="Kamihara K."/>
            <person name="Katsuta N."/>
            <person name="Sato K."/>
            <person name="Tanikawa M."/>
            <person name="Yamazaki M."/>
            <person name="Ninomiya K."/>
            <person name="Ishibashi T."/>
            <person name="Yamashita H."/>
            <person name="Murakawa K."/>
            <person name="Fujimori K."/>
            <person name="Tanai H."/>
            <person name="Kimata M."/>
            <person name="Watanabe M."/>
            <person name="Hiraoka S."/>
            <person name="Chiba Y."/>
            <person name="Ishida S."/>
            <person name="Ono Y."/>
            <person name="Takiguchi S."/>
            <person name="Watanabe S."/>
            <person name="Yosida M."/>
            <person name="Hotuta T."/>
            <person name="Kusano J."/>
            <person name="Kanehori K."/>
            <person name="Takahashi-Fujii A."/>
            <person name="Hara H."/>
            <person name="Tanase T.-O."/>
            <person name="Nomura Y."/>
            <person name="Togiya S."/>
            <person name="Komai F."/>
            <person name="Hara R."/>
            <person name="Takeuchi K."/>
            <person name="Arita M."/>
            <person name="Imose N."/>
            <person name="Musashino K."/>
            <person name="Yuuki H."/>
            <person name="Oshima A."/>
            <person name="Sasaki N."/>
            <person name="Aotsuka S."/>
            <person name="Yoshikawa Y."/>
            <person name="Matsunawa H."/>
            <person name="Ichihara T."/>
            <person name="Shiohata N."/>
            <person name="Sano S."/>
            <person name="Moriya S."/>
            <person name="Momiyama H."/>
            <person name="Satoh N."/>
            <person name="Takami S."/>
            <person name="Terashima Y."/>
            <person name="Suzuki O."/>
            <person name="Nakagawa S."/>
            <person name="Senoh A."/>
            <person name="Mizoguchi H."/>
            <person name="Goto Y."/>
            <person name="Shimizu F."/>
            <person name="Wakebe H."/>
            <person name="Hishigaki H."/>
            <person name="Watanabe T."/>
            <person name="Sugiyama A."/>
            <person name="Takemoto M."/>
            <person name="Kawakami B."/>
            <person name="Yamazaki M."/>
            <person name="Watanabe K."/>
            <person name="Kumagai A."/>
            <person name="Itakura S."/>
            <person name="Fukuzumi Y."/>
            <person name="Fujimori Y."/>
            <person name="Komiyama M."/>
            <person name="Tashiro H."/>
            <person name="Tanigami A."/>
            <person name="Fujiwara T."/>
            <person name="Ono T."/>
            <person name="Yamada K."/>
            <person name="Fujii Y."/>
            <person name="Ozaki K."/>
            <person name="Hirao M."/>
            <person name="Ohmori Y."/>
            <person name="Kawabata A."/>
            <person name="Hikiji T."/>
            <person name="Kobatake N."/>
            <person name="Inagaki H."/>
            <person name="Ikema Y."/>
            <person name="Okamoto S."/>
            <person name="Okitani R."/>
            <person name="Kawakami T."/>
            <person name="Noguchi S."/>
            <person name="Itoh T."/>
            <person name="Shigeta K."/>
            <person name="Senba T."/>
            <person name="Matsumura K."/>
            <person name="Nakajima Y."/>
            <person name="Mizuno T."/>
            <person name="Morinaga M."/>
            <person name="Sasaki M."/>
            <person name="Togashi T."/>
            <person name="Oyama M."/>
            <person name="Hata H."/>
            <person name="Watanabe M."/>
            <person name="Komatsu T."/>
            <person name="Mizushima-Sugano J."/>
            <person name="Satoh T."/>
            <person name="Shirai Y."/>
            <person name="Takahashi Y."/>
            <person name="Nakagawa K."/>
            <person name="Okumura K."/>
            <person name="Nagase T."/>
            <person name="Nomura N."/>
            <person name="Kikuchi H."/>
            <person name="Masuho Y."/>
            <person name="Yamashita R."/>
            <person name="Nakai K."/>
            <person name="Yada T."/>
            <person name="Nakamura Y."/>
            <person name="Ohara O."/>
            <person name="Isogai T."/>
            <person name="Sugano S."/>
        </authorList>
    </citation>
    <scope>NUCLEOTIDE SEQUENCE [LARGE SCALE MRNA] OF 1-782</scope>
</reference>
<reference key="6">
    <citation type="journal article" date="2001" name="DNA Res.">
        <title>Prediction of the coding sequences of unidentified human genes. XXI. The complete sequences of 60 new cDNA clones from brain which code for large proteins.</title>
        <authorList>
            <person name="Nagase T."/>
            <person name="Kikuno R."/>
            <person name="Ohara O."/>
        </authorList>
    </citation>
    <scope>NUCLEOTIDE SEQUENCE [LARGE SCALE MRNA] OF 179-1325</scope>
    <source>
        <tissue>Brain</tissue>
    </source>
</reference>
<reference key="7">
    <citation type="journal article" date="2013" name="PLoS ONE">
        <title>ZBED evolution: repeated utilization of DNA transposons as regulators of diverse host functions.</title>
        <authorList>
            <person name="Hayward A."/>
            <person name="Ghazal A."/>
            <person name="Andersson G."/>
            <person name="Andersson L."/>
            <person name="Jern P."/>
        </authorList>
    </citation>
    <scope>PHYLOGENY</scope>
</reference>
<reference key="8">
    <citation type="journal article" date="2017" name="Oncotarget">
        <title>ZNF452 facilitates tumor proliferation and invasion via activating AKT-GSK3beta signaling pathway and predicts poor prognosis of non-small cell lung cancer patients.</title>
        <authorList>
            <person name="Zhang X."/>
            <person name="Zhou H."/>
            <person name="Zhang Y."/>
            <person name="Cai L."/>
            <person name="Jiang G."/>
            <person name="Li A."/>
            <person name="Miao Y."/>
            <person name="Li Q."/>
            <person name="Qiu X."/>
            <person name="Wang E."/>
        </authorList>
    </citation>
    <scope>TISSUE SPECIFICITY</scope>
</reference>
<evidence type="ECO:0000255" key="1"/>
<evidence type="ECO:0000255" key="2">
    <source>
        <dbReference type="PROSITE-ProRule" id="PRU00187"/>
    </source>
</evidence>
<evidence type="ECO:0000255" key="3">
    <source>
        <dbReference type="PROSITE-ProRule" id="PRU00457"/>
    </source>
</evidence>
<evidence type="ECO:0000269" key="4">
    <source>
    </source>
</evidence>
<evidence type="ECO:0000269" key="5">
    <source>
    </source>
</evidence>
<evidence type="ECO:0000303" key="6">
    <source>
    </source>
</evidence>
<evidence type="ECO:0000305" key="7"/>
<evidence type="ECO:0000305" key="8">
    <source>
    </source>
</evidence>
<evidence type="ECO:0000312" key="9">
    <source>
        <dbReference type="HGNC" id="HGNC:13851"/>
    </source>
</evidence>
<dbReference type="EMBL" id="AL713690">
    <property type="protein sequence ID" value="CAD28490.2"/>
    <property type="molecule type" value="mRNA"/>
</dbReference>
<dbReference type="EMBL" id="BX647791">
    <property type="status" value="NOT_ANNOTATED_CDS"/>
    <property type="molecule type" value="mRNA"/>
</dbReference>
<dbReference type="EMBL" id="AY517631">
    <property type="protein sequence ID" value="AAS01734.1"/>
    <property type="molecule type" value="mRNA"/>
</dbReference>
<dbReference type="EMBL" id="AL671879">
    <property type="status" value="NOT_ANNOTATED_CDS"/>
    <property type="molecule type" value="Genomic_DNA"/>
</dbReference>
<dbReference type="EMBL" id="BC110834">
    <property type="protein sequence ID" value="AAI10835.1"/>
    <property type="molecule type" value="mRNA"/>
</dbReference>
<dbReference type="EMBL" id="BC111741">
    <property type="protein sequence ID" value="AAI11742.1"/>
    <property type="molecule type" value="mRNA"/>
</dbReference>
<dbReference type="EMBL" id="BC111742">
    <property type="protein sequence ID" value="AAI11743.1"/>
    <property type="molecule type" value="mRNA"/>
</dbReference>
<dbReference type="EMBL" id="AK056369">
    <property type="protein sequence ID" value="BAB71166.1"/>
    <property type="molecule type" value="mRNA"/>
</dbReference>
<dbReference type="EMBL" id="AB067512">
    <property type="protein sequence ID" value="BAB67818.1"/>
    <property type="molecule type" value="mRNA"/>
</dbReference>
<dbReference type="CCDS" id="CCDS34355.1"/>
<dbReference type="RefSeq" id="NP_001316545.1">
    <property type="nucleotide sequence ID" value="NM_001329616.1"/>
</dbReference>
<dbReference type="RefSeq" id="NP_443155.1">
    <property type="nucleotide sequence ID" value="NM_052923.2"/>
</dbReference>
<dbReference type="RefSeq" id="XP_047274112.1">
    <property type="nucleotide sequence ID" value="XM_047418156.1"/>
</dbReference>
<dbReference type="RefSeq" id="XP_047274113.1">
    <property type="nucleotide sequence ID" value="XM_047418157.1"/>
</dbReference>
<dbReference type="RefSeq" id="XP_047274114.1">
    <property type="nucleotide sequence ID" value="XM_047418158.1"/>
</dbReference>
<dbReference type="RefSeq" id="XP_054185706.1">
    <property type="nucleotide sequence ID" value="XM_054329731.1"/>
</dbReference>
<dbReference type="RefSeq" id="XP_054185707.1">
    <property type="nucleotide sequence ID" value="XM_054329732.1"/>
</dbReference>
<dbReference type="RefSeq" id="XP_054185708.1">
    <property type="nucleotide sequence ID" value="XM_054329733.1"/>
</dbReference>
<dbReference type="RefSeq" id="XP_054185709.1">
    <property type="nucleotide sequence ID" value="XM_054329734.1"/>
</dbReference>
<dbReference type="RefSeq" id="XP_054210148.1">
    <property type="nucleotide sequence ID" value="XM_054354173.1"/>
</dbReference>
<dbReference type="RefSeq" id="XP_054210149.1">
    <property type="nucleotide sequence ID" value="XM_054354174.1"/>
</dbReference>
<dbReference type="RefSeq" id="XP_054210150.1">
    <property type="nucleotide sequence ID" value="XM_054354175.1"/>
</dbReference>
<dbReference type="RefSeq" id="XP_054210151.1">
    <property type="nucleotide sequence ID" value="XM_054354176.1"/>
</dbReference>
<dbReference type="BioGRID" id="125371">
    <property type="interactions" value="15"/>
</dbReference>
<dbReference type="FunCoup" id="Q6R2W3">
    <property type="interactions" value="280"/>
</dbReference>
<dbReference type="IntAct" id="Q6R2W3">
    <property type="interactions" value="12"/>
</dbReference>
<dbReference type="STRING" id="9606.ENSP00000395259"/>
<dbReference type="GlyConnect" id="2072">
    <property type="glycosylation" value="1 N-Linked glycan (1 site)"/>
</dbReference>
<dbReference type="GlyCosmos" id="Q6R2W3">
    <property type="glycosylation" value="2 sites, 3 glycans"/>
</dbReference>
<dbReference type="GlyGen" id="Q6R2W3">
    <property type="glycosylation" value="2 sites, 2 N-linked glycans (1 site), 1 O-linked glycan (1 site)"/>
</dbReference>
<dbReference type="iPTMnet" id="Q6R2W3"/>
<dbReference type="PhosphoSitePlus" id="Q6R2W3"/>
<dbReference type="BioMuta" id="ZBED9"/>
<dbReference type="DMDM" id="74710067"/>
<dbReference type="jPOST" id="Q6R2W3"/>
<dbReference type="MassIVE" id="Q6R2W3"/>
<dbReference type="PaxDb" id="9606-ENSP00000395259"/>
<dbReference type="PeptideAtlas" id="Q6R2W3"/>
<dbReference type="ProteomicsDB" id="67309"/>
<dbReference type="Antibodypedia" id="25911">
    <property type="antibodies" value="77 antibodies from 18 providers"/>
</dbReference>
<dbReference type="DNASU" id="114821"/>
<dbReference type="Ensembl" id="ENST00000452236.3">
    <property type="protein sequence ID" value="ENSP00000395259.2"/>
    <property type="gene ID" value="ENSG00000232040.4"/>
</dbReference>
<dbReference type="GeneID" id="114821"/>
<dbReference type="KEGG" id="hsa:114821"/>
<dbReference type="MANE-Select" id="ENST00000452236.3">
    <property type="protein sequence ID" value="ENSP00000395259.2"/>
    <property type="RefSeq nucleotide sequence ID" value="NM_052923.2"/>
    <property type="RefSeq protein sequence ID" value="NP_443155.1"/>
</dbReference>
<dbReference type="UCSC" id="uc003nlo.3">
    <property type="organism name" value="human"/>
</dbReference>
<dbReference type="AGR" id="HGNC:13851"/>
<dbReference type="CTD" id="114821"/>
<dbReference type="DisGeNET" id="114821"/>
<dbReference type="GeneCards" id="SCAND3"/>
<dbReference type="HGNC" id="HGNC:13851">
    <property type="gene designation" value="SCAND3"/>
</dbReference>
<dbReference type="HPA" id="ENSG00000232040">
    <property type="expression patterns" value="Tissue enhanced (testis)"/>
</dbReference>
<dbReference type="MIM" id="615254">
    <property type="type" value="gene"/>
</dbReference>
<dbReference type="neXtProt" id="NX_Q6R2W3"/>
<dbReference type="OpenTargets" id="ENSG00000232040"/>
<dbReference type="PharmGKB" id="PA162402460"/>
<dbReference type="VEuPathDB" id="HostDB:ENSG00000232040"/>
<dbReference type="eggNOG" id="KOG0017">
    <property type="taxonomic scope" value="Eukaryota"/>
</dbReference>
<dbReference type="eggNOG" id="KOG1721">
    <property type="taxonomic scope" value="Eukaryota"/>
</dbReference>
<dbReference type="GeneTree" id="ENSGT00940000160807"/>
<dbReference type="HOGENOM" id="CLU_006012_0_0_1"/>
<dbReference type="InParanoid" id="Q6R2W3"/>
<dbReference type="OMA" id="VWSQLFK"/>
<dbReference type="OrthoDB" id="10060419at2759"/>
<dbReference type="PAN-GO" id="Q6R2W3">
    <property type="GO annotations" value="0 GO annotations based on evolutionary models"/>
</dbReference>
<dbReference type="PhylomeDB" id="Q6R2W3"/>
<dbReference type="TreeFam" id="TF323092"/>
<dbReference type="PathwayCommons" id="Q6R2W3"/>
<dbReference type="SignaLink" id="Q6R2W3"/>
<dbReference type="BioGRID-ORCS" id="114821">
    <property type="hits" value="7 hits in 1154 CRISPR screens"/>
</dbReference>
<dbReference type="ChiTaRS" id="ZBED9">
    <property type="organism name" value="human"/>
</dbReference>
<dbReference type="GeneWiki" id="ZNF452"/>
<dbReference type="GenomeRNAi" id="114821"/>
<dbReference type="Pharos" id="Q6R2W3">
    <property type="development level" value="Tbio"/>
</dbReference>
<dbReference type="PRO" id="PR:Q6R2W3"/>
<dbReference type="Proteomes" id="UP000005640">
    <property type="component" value="Chromosome 6"/>
</dbReference>
<dbReference type="RNAct" id="Q6R2W3">
    <property type="molecule type" value="protein"/>
</dbReference>
<dbReference type="Bgee" id="ENSG00000232040">
    <property type="expression patterns" value="Expressed in primordial germ cell in gonad and 117 other cell types or tissues"/>
</dbReference>
<dbReference type="ExpressionAtlas" id="Q6R2W3">
    <property type="expression patterns" value="baseline and differential"/>
</dbReference>
<dbReference type="GO" id="GO:0005737">
    <property type="term" value="C:cytoplasm"/>
    <property type="evidence" value="ECO:0000314"/>
    <property type="project" value="UniProtKB"/>
</dbReference>
<dbReference type="GO" id="GO:0005634">
    <property type="term" value="C:nucleus"/>
    <property type="evidence" value="ECO:0007669"/>
    <property type="project" value="UniProtKB-SubCell"/>
</dbReference>
<dbReference type="GO" id="GO:0003676">
    <property type="term" value="F:nucleic acid binding"/>
    <property type="evidence" value="ECO:0007669"/>
    <property type="project" value="InterPro"/>
</dbReference>
<dbReference type="GO" id="GO:0015074">
    <property type="term" value="P:DNA integration"/>
    <property type="evidence" value="ECO:0007669"/>
    <property type="project" value="InterPro"/>
</dbReference>
<dbReference type="GO" id="GO:0045787">
    <property type="term" value="P:positive regulation of cell cycle"/>
    <property type="evidence" value="ECO:0000315"/>
    <property type="project" value="UniProtKB"/>
</dbReference>
<dbReference type="GO" id="GO:0050679">
    <property type="term" value="P:positive regulation of epithelial cell proliferation"/>
    <property type="evidence" value="ECO:0000315"/>
    <property type="project" value="UniProtKB"/>
</dbReference>
<dbReference type="CDD" id="cd07936">
    <property type="entry name" value="SCAN"/>
    <property type="match status" value="1"/>
</dbReference>
<dbReference type="FunFam" id="1.10.4020.10:FF:000001">
    <property type="entry name" value="zinc finger protein 263 isoform X1"/>
    <property type="match status" value="1"/>
</dbReference>
<dbReference type="Gene3D" id="1.10.4020.10">
    <property type="entry name" value="DNA breaking-rejoining enzymes"/>
    <property type="match status" value="1"/>
</dbReference>
<dbReference type="Gene3D" id="3.30.420.10">
    <property type="entry name" value="Ribonuclease H-like superfamily/Ribonuclease H"/>
    <property type="match status" value="1"/>
</dbReference>
<dbReference type="InterPro" id="IPR001584">
    <property type="entry name" value="Integrase_cat-core"/>
</dbReference>
<dbReference type="InterPro" id="IPR012337">
    <property type="entry name" value="RNaseH-like_sf"/>
</dbReference>
<dbReference type="InterPro" id="IPR036397">
    <property type="entry name" value="RNaseH_sf"/>
</dbReference>
<dbReference type="InterPro" id="IPR003309">
    <property type="entry name" value="SCAN_dom"/>
</dbReference>
<dbReference type="InterPro" id="IPR038269">
    <property type="entry name" value="SCAN_sf"/>
</dbReference>
<dbReference type="PANTHER" id="PTHR45913">
    <property type="entry name" value="EPM2A-INTERACTING PROTEIN 1"/>
    <property type="match status" value="1"/>
</dbReference>
<dbReference type="PANTHER" id="PTHR45913:SF19">
    <property type="entry name" value="LOW QUALITY PROTEIN: ZINC FINGER BED DOMAIN-CONTAINING PROTEIN 5-LIKE"/>
    <property type="match status" value="1"/>
</dbReference>
<dbReference type="Pfam" id="PF02023">
    <property type="entry name" value="SCAN"/>
    <property type="match status" value="1"/>
</dbReference>
<dbReference type="Pfam" id="PF23663">
    <property type="entry name" value="Znf_SCAND3"/>
    <property type="match status" value="1"/>
</dbReference>
<dbReference type="SMART" id="SM00431">
    <property type="entry name" value="SCAN"/>
    <property type="match status" value="1"/>
</dbReference>
<dbReference type="SUPFAM" id="SSF47353">
    <property type="entry name" value="Retrovirus capsid dimerization domain-like"/>
    <property type="match status" value="1"/>
</dbReference>
<dbReference type="SUPFAM" id="SSF53098">
    <property type="entry name" value="Ribonuclease H-like"/>
    <property type="match status" value="2"/>
</dbReference>
<dbReference type="PROSITE" id="PS50994">
    <property type="entry name" value="INTEGRASE"/>
    <property type="match status" value="1"/>
</dbReference>
<dbReference type="PROSITE" id="PS50804">
    <property type="entry name" value="SCAN_BOX"/>
    <property type="match status" value="1"/>
</dbReference>
<feature type="chain" id="PRO_0000245846" description="SCAN domain-containing protein 3">
    <location>
        <begin position="1"/>
        <end position="1325"/>
    </location>
</feature>
<feature type="domain" description="SCAN box" evidence="2">
    <location>
        <begin position="52"/>
        <end position="134"/>
    </location>
</feature>
<feature type="domain" description="Integrase catalytic" evidence="3">
    <location>
        <begin position="366"/>
        <end position="526"/>
    </location>
</feature>
<feature type="coiled-coil region" evidence="1">
    <location>
        <begin position="246"/>
        <end position="275"/>
    </location>
</feature>
<feature type="coiled-coil region" evidence="1">
    <location>
        <begin position="542"/>
        <end position="568"/>
    </location>
</feature>
<feature type="sequence variant" id="VAR_027012" description="In dbSNP:rs409029.">
    <original>M</original>
    <variation>V</variation>
    <location>
        <position position="155"/>
    </location>
</feature>
<feature type="sequence variant" id="VAR_061703" description="In dbSNP:rs41270593." evidence="4">
    <original>Q</original>
    <variation>K</variation>
    <location>
        <position position="465"/>
    </location>
</feature>
<feature type="sequence conflict" description="In Ref. 1; BX647791." evidence="7" ref="1">
    <original>T</original>
    <variation>A</variation>
    <location>
        <position position="145"/>
    </location>
</feature>
<feature type="sequence conflict" description="In Ref. 1; BX647791." evidence="7" ref="1">
    <original>L</original>
    <variation>P</variation>
    <location>
        <position position="536"/>
    </location>
</feature>
<feature type="sequence conflict" description="In Ref. 1; BX647791." evidence="7" ref="1">
    <original>L</original>
    <variation>P</variation>
    <location>
        <position position="582"/>
    </location>
</feature>
<feature type="sequence conflict" description="In Ref. 1; BX647791." evidence="7" ref="1">
    <original>I</original>
    <variation>V</variation>
    <location>
        <position position="913"/>
    </location>
</feature>
<feature type="sequence conflict" description="In Ref. 1; CAD28490." evidence="7" ref="1">
    <original>F</original>
    <variation>FF</variation>
    <location>
        <position position="1112"/>
    </location>
</feature>
<feature type="sequence conflict" description="In Ref. 1; BX647791." evidence="7" ref="1">
    <original>L</original>
    <variation>H</variation>
    <location>
        <position position="1169"/>
    </location>
</feature>
<comment type="subcellular location">
    <subcellularLocation>
        <location evidence="2">Nucleus</location>
    </subcellularLocation>
</comment>
<comment type="tissue specificity">
    <text evidence="5">Weakly expressed in the lung (at protein level).</text>
</comment>
<comment type="miscellaneous">
    <text evidence="5">Highly expressed in non-small-cell lung carcinoma (NSCLC) tissue, with increased expression correlating with advanced disease, lymph node metastases and poor prognosis, as such may be a candidate prognostic marker (PubMed:28418919). May act as an oncogene and promote tumor growth via positive regulation of cell cycle progression at G1/S phase transition (PubMed:28418919). May promote invasion and metastasis via activation of the AKT/GSK-3 beta signaling pathway (PubMed:28418919). Expressed in the cytoplasm in NSCLC tissue (PubMed:28418919).</text>
</comment>
<comment type="miscellaneous">
    <text evidence="8">May be derived from an ancient transposon that has lost its ability to translocate.</text>
</comment>
<accession>Q6R2W3</accession>
<accession>Q2NKL9</accession>
<accession>Q5SRJ3</accession>
<accession>Q8TCN2</accession>
<accession>Q96MV9</accession>
<accession>Q96PW3</accession>
<protein>
    <recommendedName>
        <fullName>SCAN domain-containing protein 3</fullName>
    </recommendedName>
    <alternativeName>
        <fullName>Transposon-derived Buster4 transposase-like protein</fullName>
    </alternativeName>
    <alternativeName>
        <fullName>Zinc finger BED domain-containing protein 9</fullName>
    </alternativeName>
</protein>
<gene>
    <name evidence="9" type="primary">SCAND3</name>
    <name type="synonym">Buster4</name>
    <name type="synonym">KIAA1925</name>
    <name type="synonym">ZBED9</name>
    <name type="synonym">ZNF305P2</name>
    <name evidence="6" type="synonym">ZNF452</name>
</gene>